<reference key="1">
    <citation type="journal article" date="2004" name="PLoS Biol.">
        <title>Genomic insights into methanotrophy: the complete genome sequence of Methylococcus capsulatus (Bath).</title>
        <authorList>
            <person name="Ward N.L."/>
            <person name="Larsen O."/>
            <person name="Sakwa J."/>
            <person name="Bruseth L."/>
            <person name="Khouri H.M."/>
            <person name="Durkin A.S."/>
            <person name="Dimitrov G."/>
            <person name="Jiang L."/>
            <person name="Scanlan D."/>
            <person name="Kang K.H."/>
            <person name="Lewis M.R."/>
            <person name="Nelson K.E."/>
            <person name="Methe B.A."/>
            <person name="Wu M."/>
            <person name="Heidelberg J.F."/>
            <person name="Paulsen I.T."/>
            <person name="Fouts D.E."/>
            <person name="Ravel J."/>
            <person name="Tettelin H."/>
            <person name="Ren Q."/>
            <person name="Read T.D."/>
            <person name="DeBoy R.T."/>
            <person name="Seshadri R."/>
            <person name="Salzberg S.L."/>
            <person name="Jensen H.B."/>
            <person name="Birkeland N.K."/>
            <person name="Nelson W.C."/>
            <person name="Dodson R.J."/>
            <person name="Grindhaug S.H."/>
            <person name="Holt I.E."/>
            <person name="Eidhammer I."/>
            <person name="Jonasen I."/>
            <person name="Vanaken S."/>
            <person name="Utterback T.R."/>
            <person name="Feldblyum T.V."/>
            <person name="Fraser C.M."/>
            <person name="Lillehaug J.R."/>
            <person name="Eisen J.A."/>
        </authorList>
    </citation>
    <scope>NUCLEOTIDE SEQUENCE [LARGE SCALE GENOMIC DNA]</scope>
    <source>
        <strain>ATCC 33009 / NCIMB 11132 / Bath</strain>
    </source>
</reference>
<evidence type="ECO:0000255" key="1">
    <source>
        <dbReference type="HAMAP-Rule" id="MF_01014"/>
    </source>
</evidence>
<comment type="catalytic activity">
    <reaction evidence="1">
        <text>1-(5-phospho-beta-D-ribosyl)-5-[(5-phospho-beta-D-ribosylamino)methylideneamino]imidazole-4-carboxamide = 5-[(5-phospho-1-deoxy-D-ribulos-1-ylimino)methylamino]-1-(5-phospho-beta-D-ribosyl)imidazole-4-carboxamide</text>
        <dbReference type="Rhea" id="RHEA:15469"/>
        <dbReference type="ChEBI" id="CHEBI:58435"/>
        <dbReference type="ChEBI" id="CHEBI:58525"/>
        <dbReference type="EC" id="5.3.1.16"/>
    </reaction>
</comment>
<comment type="pathway">
    <text evidence="1">Amino-acid biosynthesis; L-histidine biosynthesis; L-histidine from 5-phospho-alpha-D-ribose 1-diphosphate: step 4/9.</text>
</comment>
<comment type="subcellular location">
    <subcellularLocation>
        <location evidence="1">Cytoplasm</location>
    </subcellularLocation>
</comment>
<comment type="similarity">
    <text evidence="1">Belongs to the HisA/HisF family.</text>
</comment>
<accession>Q603K2</accession>
<gene>
    <name evidence="1" type="primary">hisA</name>
    <name type="ordered locus">MCA2803</name>
</gene>
<sequence length="243" mass="25837">MLLIPAIDLKDGKCVRLRQGRMEDDTVFSDDPVAVAGRWVAAGARRLHLVDLDGAFAGKPRNAETIHAIREACPDVEIQVGGGIRDEETIQGYLNAGVDFVIIGTKAVSAPHFVSDVTAEFPNHIIIGLDARDGKVAIDGWSKLSHHDVIDLAQKFEADGVEAIIYTDISRDGMMGGVNIEATSRLARAIHIPVIASGGITTIDDIKALGEIVGDGVIGAITGRAIYEGTLDFAEGLKLAETF</sequence>
<proteinExistence type="inferred from homology"/>
<name>HIS4_METCA</name>
<keyword id="KW-0028">Amino-acid biosynthesis</keyword>
<keyword id="KW-0963">Cytoplasm</keyword>
<keyword id="KW-0368">Histidine biosynthesis</keyword>
<keyword id="KW-0413">Isomerase</keyword>
<keyword id="KW-1185">Reference proteome</keyword>
<organism>
    <name type="scientific">Methylococcus capsulatus (strain ATCC 33009 / NCIMB 11132 / Bath)</name>
    <dbReference type="NCBI Taxonomy" id="243233"/>
    <lineage>
        <taxon>Bacteria</taxon>
        <taxon>Pseudomonadati</taxon>
        <taxon>Pseudomonadota</taxon>
        <taxon>Gammaproteobacteria</taxon>
        <taxon>Methylococcales</taxon>
        <taxon>Methylococcaceae</taxon>
        <taxon>Methylococcus</taxon>
    </lineage>
</organism>
<feature type="chain" id="PRO_0000142024" description="1-(5-phosphoribosyl)-5-[(5-phosphoribosylamino)methylideneamino] imidazole-4-carboxamide isomerase">
    <location>
        <begin position="1"/>
        <end position="243"/>
    </location>
</feature>
<feature type="active site" description="Proton acceptor" evidence="1">
    <location>
        <position position="8"/>
    </location>
</feature>
<feature type="active site" description="Proton donor" evidence="1">
    <location>
        <position position="130"/>
    </location>
</feature>
<protein>
    <recommendedName>
        <fullName evidence="1">1-(5-phosphoribosyl)-5-[(5-phosphoribosylamino)methylideneamino] imidazole-4-carboxamide isomerase</fullName>
        <ecNumber evidence="1">5.3.1.16</ecNumber>
    </recommendedName>
    <alternativeName>
        <fullName evidence="1">Phosphoribosylformimino-5-aminoimidazole carboxamide ribotide isomerase</fullName>
    </alternativeName>
</protein>
<dbReference type="EC" id="5.3.1.16" evidence="1"/>
<dbReference type="EMBL" id="AE017282">
    <property type="protein sequence ID" value="AAU91078.1"/>
    <property type="molecule type" value="Genomic_DNA"/>
</dbReference>
<dbReference type="RefSeq" id="WP_010962004.1">
    <property type="nucleotide sequence ID" value="NC_002977.6"/>
</dbReference>
<dbReference type="SMR" id="Q603K2"/>
<dbReference type="STRING" id="243233.MCA2803"/>
<dbReference type="GeneID" id="88224979"/>
<dbReference type="KEGG" id="mca:MCA2803"/>
<dbReference type="eggNOG" id="COG0106">
    <property type="taxonomic scope" value="Bacteria"/>
</dbReference>
<dbReference type="HOGENOM" id="CLU_048577_1_1_6"/>
<dbReference type="UniPathway" id="UPA00031">
    <property type="reaction ID" value="UER00009"/>
</dbReference>
<dbReference type="Proteomes" id="UP000006821">
    <property type="component" value="Chromosome"/>
</dbReference>
<dbReference type="GO" id="GO:0005737">
    <property type="term" value="C:cytoplasm"/>
    <property type="evidence" value="ECO:0007669"/>
    <property type="project" value="UniProtKB-SubCell"/>
</dbReference>
<dbReference type="GO" id="GO:0003949">
    <property type="term" value="F:1-(5-phosphoribosyl)-5-[(5-phosphoribosylamino)methylideneamino]imidazole-4-carboxamide isomerase activity"/>
    <property type="evidence" value="ECO:0007669"/>
    <property type="project" value="UniProtKB-UniRule"/>
</dbReference>
<dbReference type="GO" id="GO:0000105">
    <property type="term" value="P:L-histidine biosynthetic process"/>
    <property type="evidence" value="ECO:0007669"/>
    <property type="project" value="UniProtKB-UniRule"/>
</dbReference>
<dbReference type="GO" id="GO:0000162">
    <property type="term" value="P:L-tryptophan biosynthetic process"/>
    <property type="evidence" value="ECO:0007669"/>
    <property type="project" value="TreeGrafter"/>
</dbReference>
<dbReference type="CDD" id="cd04732">
    <property type="entry name" value="HisA"/>
    <property type="match status" value="1"/>
</dbReference>
<dbReference type="FunFam" id="3.20.20.70:FF:000009">
    <property type="entry name" value="1-(5-phosphoribosyl)-5-[(5-phosphoribosylamino)methylideneamino] imidazole-4-carboxamide isomerase"/>
    <property type="match status" value="1"/>
</dbReference>
<dbReference type="Gene3D" id="3.20.20.70">
    <property type="entry name" value="Aldolase class I"/>
    <property type="match status" value="1"/>
</dbReference>
<dbReference type="HAMAP" id="MF_01014">
    <property type="entry name" value="HisA"/>
    <property type="match status" value="1"/>
</dbReference>
<dbReference type="InterPro" id="IPR013785">
    <property type="entry name" value="Aldolase_TIM"/>
</dbReference>
<dbReference type="InterPro" id="IPR006062">
    <property type="entry name" value="His_biosynth"/>
</dbReference>
<dbReference type="InterPro" id="IPR006063">
    <property type="entry name" value="HisA_bact_arch"/>
</dbReference>
<dbReference type="InterPro" id="IPR044524">
    <property type="entry name" value="Isoase_HisA-like"/>
</dbReference>
<dbReference type="InterPro" id="IPR023016">
    <property type="entry name" value="Isoase_HisA-like_bact"/>
</dbReference>
<dbReference type="InterPro" id="IPR011060">
    <property type="entry name" value="RibuloseP-bd_barrel"/>
</dbReference>
<dbReference type="NCBIfam" id="TIGR00007">
    <property type="entry name" value="1-(5-phosphoribosyl)-5-[(5-phosphoribosylamino)methylideneamino]imidazole-4-carboxamide isomerase"/>
    <property type="match status" value="1"/>
</dbReference>
<dbReference type="NCBIfam" id="NF010112">
    <property type="entry name" value="PRK13585.1"/>
    <property type="match status" value="1"/>
</dbReference>
<dbReference type="PANTHER" id="PTHR43090">
    <property type="entry name" value="1-(5-PHOSPHORIBOSYL)-5-[(5-PHOSPHORIBOSYLAMINO)METHYLIDENEAMINO] IMIDAZOLE-4-CARBOXAMIDE ISOMERASE"/>
    <property type="match status" value="1"/>
</dbReference>
<dbReference type="PANTHER" id="PTHR43090:SF2">
    <property type="entry name" value="1-(5-PHOSPHORIBOSYL)-5-[(5-PHOSPHORIBOSYLAMINO)METHYLIDENEAMINO] IMIDAZOLE-4-CARBOXAMIDE ISOMERASE"/>
    <property type="match status" value="1"/>
</dbReference>
<dbReference type="Pfam" id="PF00977">
    <property type="entry name" value="His_biosynth"/>
    <property type="match status" value="1"/>
</dbReference>
<dbReference type="SUPFAM" id="SSF51366">
    <property type="entry name" value="Ribulose-phoshate binding barrel"/>
    <property type="match status" value="1"/>
</dbReference>